<protein>
    <recommendedName>
        <fullName>Dynactin subunit 2</fullName>
    </recommendedName>
</protein>
<organism>
    <name type="scientific">Danio rerio</name>
    <name type="common">Zebrafish</name>
    <name type="synonym">Brachydanio rerio</name>
    <dbReference type="NCBI Taxonomy" id="7955"/>
    <lineage>
        <taxon>Eukaryota</taxon>
        <taxon>Metazoa</taxon>
        <taxon>Chordata</taxon>
        <taxon>Craniata</taxon>
        <taxon>Vertebrata</taxon>
        <taxon>Euteleostomi</taxon>
        <taxon>Actinopterygii</taxon>
        <taxon>Neopterygii</taxon>
        <taxon>Teleostei</taxon>
        <taxon>Ostariophysi</taxon>
        <taxon>Cypriniformes</taxon>
        <taxon>Danionidae</taxon>
        <taxon>Danioninae</taxon>
        <taxon>Danio</taxon>
    </lineage>
</organism>
<evidence type="ECO:0000250" key="1">
    <source>
        <dbReference type="UniProtKB" id="A0A5G2QD80"/>
    </source>
</evidence>
<evidence type="ECO:0000250" key="2">
    <source>
        <dbReference type="UniProtKB" id="Q13561"/>
    </source>
</evidence>
<evidence type="ECO:0000250" key="3">
    <source>
        <dbReference type="UniProtKB" id="Q99KJ8"/>
    </source>
</evidence>
<evidence type="ECO:0000255" key="4"/>
<evidence type="ECO:0000256" key="5">
    <source>
        <dbReference type="SAM" id="MobiDB-lite"/>
    </source>
</evidence>
<evidence type="ECO:0000305" key="6"/>
<accession>Q7T3H1</accession>
<accession>Q07DR0</accession>
<name>DCTN2_DANRE</name>
<proteinExistence type="evidence at transcript level"/>
<gene>
    <name type="primary">dctn2</name>
</gene>
<feature type="chain" id="PRO_0000288768" description="Dynactin subunit 2">
    <location>
        <begin position="1"/>
        <end position="405"/>
    </location>
</feature>
<feature type="region of interest" description="Disordered" evidence="5">
    <location>
        <begin position="1"/>
        <end position="24"/>
    </location>
</feature>
<feature type="coiled-coil region" evidence="4">
    <location>
        <begin position="102"/>
        <end position="125"/>
    </location>
</feature>
<feature type="coiled-coil region" evidence="4">
    <location>
        <begin position="379"/>
        <end position="405"/>
    </location>
</feature>
<keyword id="KW-0175">Coiled coil</keyword>
<keyword id="KW-0963">Cytoplasm</keyword>
<keyword id="KW-0206">Cytoskeleton</keyword>
<keyword id="KW-0243">Dynein</keyword>
<keyword id="KW-0472">Membrane</keyword>
<keyword id="KW-0493">Microtubule</keyword>
<keyword id="KW-1185">Reference proteome</keyword>
<sequence>MADPKYANLPGIASNEPDVYETSDLPEDDQAQFESELEELCSDSVERIVVNPNAAYDKFKDKHVSAKSLDFSDRISKNRRVGYESGDYELLAEGCGVKETPQQKYQRLVNEIHELCQDVEKIQTSTKESGAEERLTPVALAQQAAQLKQQLVSAHLDSLLGPDAHINLTDPDGALAKRLLTQLEVARGVRSGAGADGKTAAPKGPDGVILYELHSRPEQEKFTESAKVAELERRLAELETAVGSGSDKRGPLSSGVQGSSLTETLELLQARVSALDAATLDQVEARLQSVLGKMNEIAKHKATMEDAETQSKVSQLYDVVQKWDAMATSLPQVVRRLTAVRELHEQAMQFGQLLTHLDTTQQMINNSLKDNSTLLTQVQQTMKENLLAVEENFSALDQRMKKLNK</sequence>
<comment type="function">
    <text evidence="1 3">Part of the dynactin complex that activates the molecular motor dynein for ultra-processive transport along microtubules. In the dynactin soulder domain, binds the ACTR1A filament and acts as a molecular ruler to determine the length (By similarity). Modulates cytoplasmic dynein binding to an organelle, and plays a role in prometaphase chromosome alignment and spindle organization during mitosis. Involved in anchoring microtubules to centrosomes (By similarity).</text>
</comment>
<comment type="subunit">
    <text evidence="1">Subunit of dynactin, a multiprotein complex part of a tripartite complex with dynein and a adapter, such as BICDL1, BICD2 or HOOK3. The dynactin complex is built around ACTR1A/ACTB filament and consists of an actin-related filament composed of a shoulder domain, a pointed end and a barbed end. Its length is defined by its flexible shoulder domain. The soulder is composed of 2 DCTN1 subunits, 4 DCTN2 and 2 DCTN3.</text>
</comment>
<comment type="subcellular location">
    <subcellularLocation>
        <location evidence="2">Cytoplasm</location>
        <location evidence="2">Cytoskeleton</location>
        <location evidence="2">Microtubule organizing center</location>
        <location evidence="2">Centrosome</location>
    </subcellularLocation>
    <subcellularLocation>
        <location evidence="2">Membrane</location>
        <topology evidence="2">Peripheral membrane protein</topology>
    </subcellularLocation>
    <subcellularLocation>
        <location evidence="1">Cytoplasm</location>
        <location evidence="1">Cytoskeleton</location>
    </subcellularLocation>
</comment>
<comment type="similarity">
    <text evidence="6">Belongs to the dynactin subunit 2 family.</text>
</comment>
<reference key="1">
    <citation type="submission" date="2005-07" db="EMBL/GenBank/DDBJ databases">
        <title>Nuclear positioning in vertebrate photoreceptor cells.</title>
        <authorList>
            <person name="Tsujikawa M."/>
            <person name="Malicki J."/>
        </authorList>
    </citation>
    <scope>NUCLEOTIDE SEQUENCE [MRNA]</scope>
</reference>
<reference key="2">
    <citation type="submission" date="2003-06" db="EMBL/GenBank/DDBJ databases">
        <authorList>
            <consortium name="NIH - Zebrafish Gene Collection (ZGC) project"/>
        </authorList>
    </citation>
    <scope>NUCLEOTIDE SEQUENCE [LARGE SCALE MRNA]</scope>
    <source>
        <tissue>Embryo</tissue>
    </source>
</reference>
<dbReference type="EMBL" id="DQ141218">
    <property type="protein sequence ID" value="ABA29743.1"/>
    <property type="molecule type" value="mRNA"/>
</dbReference>
<dbReference type="EMBL" id="BC053120">
    <property type="protein sequence ID" value="AAH53120.1"/>
    <property type="molecule type" value="mRNA"/>
</dbReference>
<dbReference type="RefSeq" id="NP_957460.1">
    <property type="nucleotide sequence ID" value="NM_201166.1"/>
</dbReference>
<dbReference type="SMR" id="Q7T3H1"/>
<dbReference type="FunCoup" id="Q7T3H1">
    <property type="interactions" value="2854"/>
</dbReference>
<dbReference type="STRING" id="7955.ENSDARP00000042594"/>
<dbReference type="PaxDb" id="7955-ENSDARP00000093918"/>
<dbReference type="GeneID" id="394141"/>
<dbReference type="KEGG" id="dre:394141"/>
<dbReference type="AGR" id="ZFIN:ZDB-GENE-040426-1279"/>
<dbReference type="CTD" id="10540"/>
<dbReference type="ZFIN" id="ZDB-GENE-040426-1279">
    <property type="gene designation" value="dctn2"/>
</dbReference>
<dbReference type="eggNOG" id="KOG3958">
    <property type="taxonomic scope" value="Eukaryota"/>
</dbReference>
<dbReference type="InParanoid" id="Q7T3H1"/>
<dbReference type="OrthoDB" id="4977at2759"/>
<dbReference type="PhylomeDB" id="Q7T3H1"/>
<dbReference type="PRO" id="PR:Q7T3H1"/>
<dbReference type="Proteomes" id="UP000000437">
    <property type="component" value="Chromosome 6"/>
</dbReference>
<dbReference type="GO" id="GO:0005813">
    <property type="term" value="C:centrosome"/>
    <property type="evidence" value="ECO:0000318"/>
    <property type="project" value="GO_Central"/>
</dbReference>
<dbReference type="GO" id="GO:0005737">
    <property type="term" value="C:cytoplasm"/>
    <property type="evidence" value="ECO:0000318"/>
    <property type="project" value="GO_Central"/>
</dbReference>
<dbReference type="GO" id="GO:0005869">
    <property type="term" value="C:dynactin complex"/>
    <property type="evidence" value="ECO:0000318"/>
    <property type="project" value="GO_Central"/>
</dbReference>
<dbReference type="GO" id="GO:0030286">
    <property type="term" value="C:dynein complex"/>
    <property type="evidence" value="ECO:0007669"/>
    <property type="project" value="UniProtKB-KW"/>
</dbReference>
<dbReference type="GO" id="GO:0016020">
    <property type="term" value="C:membrane"/>
    <property type="evidence" value="ECO:0007669"/>
    <property type="project" value="UniProtKB-SubCell"/>
</dbReference>
<dbReference type="GO" id="GO:0005874">
    <property type="term" value="C:microtubule"/>
    <property type="evidence" value="ECO:0007669"/>
    <property type="project" value="UniProtKB-KW"/>
</dbReference>
<dbReference type="GO" id="GO:0031982">
    <property type="term" value="C:vesicle"/>
    <property type="evidence" value="ECO:0000250"/>
    <property type="project" value="UniProtKB"/>
</dbReference>
<dbReference type="GO" id="GO:0060117">
    <property type="term" value="P:auditory receptor cell development"/>
    <property type="evidence" value="ECO:0000315"/>
    <property type="project" value="ZFIN"/>
</dbReference>
<dbReference type="GO" id="GO:0035088">
    <property type="term" value="P:establishment or maintenance of apical/basal cell polarity"/>
    <property type="evidence" value="ECO:0000315"/>
    <property type="project" value="ZFIN"/>
</dbReference>
<dbReference type="GO" id="GO:0001754">
    <property type="term" value="P:eye photoreceptor cell differentiation"/>
    <property type="evidence" value="ECO:0000315"/>
    <property type="project" value="ZFIN"/>
</dbReference>
<dbReference type="GO" id="GO:0010001">
    <property type="term" value="P:glial cell differentiation"/>
    <property type="evidence" value="ECO:0000315"/>
    <property type="project" value="ZFIN"/>
</dbReference>
<dbReference type="GO" id="GO:0007052">
    <property type="term" value="P:mitotic spindle organization"/>
    <property type="evidence" value="ECO:0000318"/>
    <property type="project" value="GO_Central"/>
</dbReference>
<dbReference type="GO" id="GO:0007097">
    <property type="term" value="P:nuclear migration"/>
    <property type="evidence" value="ECO:0000315"/>
    <property type="project" value="ZFIN"/>
</dbReference>
<dbReference type="GO" id="GO:0030719">
    <property type="term" value="P:P granule organization"/>
    <property type="evidence" value="ECO:0000315"/>
    <property type="project" value="ZFIN"/>
</dbReference>
<dbReference type="GO" id="GO:0045494">
    <property type="term" value="P:photoreceptor cell maintenance"/>
    <property type="evidence" value="ECO:0000315"/>
    <property type="project" value="ZFIN"/>
</dbReference>
<dbReference type="InterPro" id="IPR028133">
    <property type="entry name" value="Dynamitin"/>
</dbReference>
<dbReference type="PANTHER" id="PTHR15346">
    <property type="entry name" value="DYNACTIN SUBUNIT"/>
    <property type="match status" value="1"/>
</dbReference>
<dbReference type="Pfam" id="PF04912">
    <property type="entry name" value="Dynamitin"/>
    <property type="match status" value="1"/>
</dbReference>